<comment type="function">
    <text evidence="1">Degrades amelogenin, the major protein component of the enamel matrix and two of the macromolecules characterizing the cartilage extracellular matrix: aggrecan and the cartilage oligomeric matrix protein (COMP). May play a central role in tooth enamel formation (By similarity).</text>
</comment>
<comment type="cofactor">
    <cofactor evidence="1">
        <name>Zn(2+)</name>
        <dbReference type="ChEBI" id="CHEBI:29105"/>
    </cofactor>
    <text evidence="1">Binds 2 Zn(2+) ions per subunit.</text>
</comment>
<comment type="cofactor">
    <cofactor evidence="1">
        <name>Ca(2+)</name>
        <dbReference type="ChEBI" id="CHEBI:29108"/>
    </cofactor>
    <text evidence="1">Binds 2 Calcium ions per subunit.</text>
</comment>
<comment type="subcellular location">
    <subcellularLocation>
        <location evidence="1">Secreted</location>
        <location evidence="1">Extracellular space</location>
        <location evidence="1">Extracellular matrix</location>
    </subcellularLocation>
</comment>
<comment type="tissue specificity">
    <text>Expressed specifically in the enamel organ.</text>
</comment>
<comment type="domain">
    <text>The conserved cysteine present in the cysteine-switch motif binds the catalytic zinc ion, thus inhibiting the enzyme. The dissociation of the cysteine from the zinc ion upon the activation-peptide release activates the enzyme.</text>
</comment>
<comment type="PTM">
    <text evidence="1">Autoactivates at least at the 107-Asn-|-Tyr-108 site.</text>
</comment>
<comment type="similarity">
    <text evidence="4">Belongs to the peptidase M10A family.</text>
</comment>
<gene>
    <name type="primary">MMP20</name>
</gene>
<organism>
    <name type="scientific">Sus scrofa</name>
    <name type="common">Pig</name>
    <dbReference type="NCBI Taxonomy" id="9823"/>
    <lineage>
        <taxon>Eukaryota</taxon>
        <taxon>Metazoa</taxon>
        <taxon>Chordata</taxon>
        <taxon>Craniata</taxon>
        <taxon>Vertebrata</taxon>
        <taxon>Euteleostomi</taxon>
        <taxon>Mammalia</taxon>
        <taxon>Eutheria</taxon>
        <taxon>Laurasiatheria</taxon>
        <taxon>Artiodactyla</taxon>
        <taxon>Suina</taxon>
        <taxon>Suidae</taxon>
        <taxon>Sus</taxon>
    </lineage>
</organism>
<keyword id="KW-0068">Autocatalytic cleavage</keyword>
<keyword id="KW-0106">Calcium</keyword>
<keyword id="KW-1015">Disulfide bond</keyword>
<keyword id="KW-0272">Extracellular matrix</keyword>
<keyword id="KW-0378">Hydrolase</keyword>
<keyword id="KW-0479">Metal-binding</keyword>
<keyword id="KW-0482">Metalloprotease</keyword>
<keyword id="KW-0645">Protease</keyword>
<keyword id="KW-1185">Reference proteome</keyword>
<keyword id="KW-0677">Repeat</keyword>
<keyword id="KW-0964">Secreted</keyword>
<keyword id="KW-0732">Signal</keyword>
<keyword id="KW-0862">Zinc</keyword>
<keyword id="KW-0865">Zymogen</keyword>
<dbReference type="EC" id="3.4.24.-"/>
<dbReference type="EMBL" id="U54825">
    <property type="protein sequence ID" value="AAB41396.1"/>
    <property type="molecule type" value="mRNA"/>
</dbReference>
<dbReference type="PIR" id="JC5743">
    <property type="entry name" value="JC5743"/>
</dbReference>
<dbReference type="RefSeq" id="NP_999070.1">
    <property type="nucleotide sequence ID" value="NM_213905.1"/>
</dbReference>
<dbReference type="SMR" id="P79287"/>
<dbReference type="FunCoup" id="P79287">
    <property type="interactions" value="32"/>
</dbReference>
<dbReference type="STRING" id="9823.ENSSSCP00000015906"/>
<dbReference type="MEROPS" id="M10.019"/>
<dbReference type="PaxDb" id="9823-ENSSSCP00000015906"/>
<dbReference type="Ensembl" id="ENSSSCT00000016345.3">
    <property type="protein sequence ID" value="ENSSSCP00000015906.2"/>
    <property type="gene ID" value="ENSSSCG00000014983.4"/>
</dbReference>
<dbReference type="Ensembl" id="ENSSSCT00015072836.1">
    <property type="protein sequence ID" value="ENSSSCP00015029214.1"/>
    <property type="gene ID" value="ENSSSCG00015054527.1"/>
</dbReference>
<dbReference type="Ensembl" id="ENSSSCT00025075029.1">
    <property type="protein sequence ID" value="ENSSSCP00025032524.1"/>
    <property type="gene ID" value="ENSSSCG00025054778.1"/>
</dbReference>
<dbReference type="Ensembl" id="ENSSSCT00030101397.1">
    <property type="protein sequence ID" value="ENSSSCP00030046770.1"/>
    <property type="gene ID" value="ENSSSCG00030072387.1"/>
</dbReference>
<dbReference type="Ensembl" id="ENSSSCT00035102700.1">
    <property type="protein sequence ID" value="ENSSSCP00035043845.1"/>
    <property type="gene ID" value="ENSSSCG00035075536.1"/>
</dbReference>
<dbReference type="Ensembl" id="ENSSSCT00040074983.1">
    <property type="protein sequence ID" value="ENSSSCP00040032172.1"/>
    <property type="gene ID" value="ENSSSCG00040055321.1"/>
</dbReference>
<dbReference type="Ensembl" id="ENSSSCT00045061917.1">
    <property type="protein sequence ID" value="ENSSSCP00045043541.1"/>
    <property type="gene ID" value="ENSSSCG00045035908.1"/>
</dbReference>
<dbReference type="Ensembl" id="ENSSSCT00050062859.1">
    <property type="protein sequence ID" value="ENSSSCP00050026989.1"/>
    <property type="gene ID" value="ENSSSCG00050046196.1"/>
</dbReference>
<dbReference type="Ensembl" id="ENSSSCT00055015360.1">
    <property type="protein sequence ID" value="ENSSSCP00055012073.1"/>
    <property type="gene ID" value="ENSSSCG00055007859.1"/>
</dbReference>
<dbReference type="Ensembl" id="ENSSSCT00060068286.1">
    <property type="protein sequence ID" value="ENSSSCP00060029329.1"/>
    <property type="gene ID" value="ENSSSCG00060050229.1"/>
</dbReference>
<dbReference type="Ensembl" id="ENSSSCT00065007938.1">
    <property type="protein sequence ID" value="ENSSSCP00065003342.1"/>
    <property type="gene ID" value="ENSSSCG00065005915.1"/>
</dbReference>
<dbReference type="Ensembl" id="ENSSSCT00085030746">
    <property type="protein sequence ID" value="ENSSSCP00085021287"/>
    <property type="gene ID" value="ENSSSCG00085016149"/>
</dbReference>
<dbReference type="Ensembl" id="ENSSSCT00090008007">
    <property type="protein sequence ID" value="ENSSSCP00090004807"/>
    <property type="gene ID" value="ENSSSCG00090004579"/>
</dbReference>
<dbReference type="Ensembl" id="ENSSSCT00105012950">
    <property type="protein sequence ID" value="ENSSSCP00105009552"/>
    <property type="gene ID" value="ENSSSCG00105006383"/>
</dbReference>
<dbReference type="Ensembl" id="ENSSSCT00110025775">
    <property type="protein sequence ID" value="ENSSSCP00110017233"/>
    <property type="gene ID" value="ENSSSCG00110013521"/>
</dbReference>
<dbReference type="Ensembl" id="ENSSSCT00115009155">
    <property type="protein sequence ID" value="ENSSSCP00115008607"/>
    <property type="gene ID" value="ENSSSCG00115005291"/>
</dbReference>
<dbReference type="Ensembl" id="ENSSSCT00130016464">
    <property type="protein sequence ID" value="ENSSSCP00130011146"/>
    <property type="gene ID" value="ENSSSCG00130008899"/>
</dbReference>
<dbReference type="GeneID" id="396939"/>
<dbReference type="KEGG" id="ssc:396939"/>
<dbReference type="CTD" id="9313"/>
<dbReference type="VGNC" id="VGNC:90275">
    <property type="gene designation" value="MMP20"/>
</dbReference>
<dbReference type="eggNOG" id="KOG1565">
    <property type="taxonomic scope" value="Eukaryota"/>
</dbReference>
<dbReference type="GeneTree" id="ENSGT00940000161277"/>
<dbReference type="HOGENOM" id="CLU_015489_6_0_1"/>
<dbReference type="InParanoid" id="P79287"/>
<dbReference type="OMA" id="YKNPYGF"/>
<dbReference type="OrthoDB" id="406838at2759"/>
<dbReference type="TreeFam" id="TF315428"/>
<dbReference type="BRENDA" id="3.4.24.B6">
    <property type="organism ID" value="6170"/>
</dbReference>
<dbReference type="Reactome" id="R-SSC-1442490">
    <property type="pathway name" value="Collagen degradation"/>
</dbReference>
<dbReference type="Reactome" id="R-SSC-1474228">
    <property type="pathway name" value="Degradation of the extracellular matrix"/>
</dbReference>
<dbReference type="Reactome" id="R-SSC-2022090">
    <property type="pathway name" value="Assembly of collagen fibrils and other multimeric structures"/>
</dbReference>
<dbReference type="Proteomes" id="UP000008227">
    <property type="component" value="Chromosome 9"/>
</dbReference>
<dbReference type="Proteomes" id="UP000314985">
    <property type="component" value="Unplaced"/>
</dbReference>
<dbReference type="Proteomes" id="UP000694570">
    <property type="component" value="Unplaced"/>
</dbReference>
<dbReference type="Proteomes" id="UP000694571">
    <property type="component" value="Unplaced"/>
</dbReference>
<dbReference type="Proteomes" id="UP000694720">
    <property type="component" value="Unplaced"/>
</dbReference>
<dbReference type="Proteomes" id="UP000694722">
    <property type="component" value="Unplaced"/>
</dbReference>
<dbReference type="Proteomes" id="UP000694723">
    <property type="component" value="Unplaced"/>
</dbReference>
<dbReference type="Proteomes" id="UP000694724">
    <property type="component" value="Unplaced"/>
</dbReference>
<dbReference type="Proteomes" id="UP000694725">
    <property type="component" value="Unplaced"/>
</dbReference>
<dbReference type="Proteomes" id="UP000694726">
    <property type="component" value="Unplaced"/>
</dbReference>
<dbReference type="Proteomes" id="UP000694727">
    <property type="component" value="Unplaced"/>
</dbReference>
<dbReference type="Proteomes" id="UP000694728">
    <property type="component" value="Unplaced"/>
</dbReference>
<dbReference type="Bgee" id="ENSSSCG00000014983">
    <property type="expression patterns" value="Expressed in immune organ and 2 other cell types or tissues"/>
</dbReference>
<dbReference type="ExpressionAtlas" id="P79287">
    <property type="expression patterns" value="baseline"/>
</dbReference>
<dbReference type="GO" id="GO:0031012">
    <property type="term" value="C:extracellular matrix"/>
    <property type="evidence" value="ECO:0007669"/>
    <property type="project" value="InterPro"/>
</dbReference>
<dbReference type="GO" id="GO:0005576">
    <property type="term" value="C:extracellular region"/>
    <property type="evidence" value="ECO:0007669"/>
    <property type="project" value="UniProtKB-KW"/>
</dbReference>
<dbReference type="GO" id="GO:0004222">
    <property type="term" value="F:metalloendopeptidase activity"/>
    <property type="evidence" value="ECO:0000318"/>
    <property type="project" value="GO_Central"/>
</dbReference>
<dbReference type="GO" id="GO:0008270">
    <property type="term" value="F:zinc ion binding"/>
    <property type="evidence" value="ECO:0007669"/>
    <property type="project" value="InterPro"/>
</dbReference>
<dbReference type="GO" id="GO:0097186">
    <property type="term" value="P:amelogenesis"/>
    <property type="evidence" value="ECO:0000318"/>
    <property type="project" value="GO_Central"/>
</dbReference>
<dbReference type="GO" id="GO:0030574">
    <property type="term" value="P:collagen catabolic process"/>
    <property type="evidence" value="ECO:0000318"/>
    <property type="project" value="GO_Central"/>
</dbReference>
<dbReference type="GO" id="GO:0022617">
    <property type="term" value="P:extracellular matrix disassembly"/>
    <property type="evidence" value="ECO:0007669"/>
    <property type="project" value="Ensembl"/>
</dbReference>
<dbReference type="GO" id="GO:0030198">
    <property type="term" value="P:extracellular matrix organization"/>
    <property type="evidence" value="ECO:0000318"/>
    <property type="project" value="GO_Central"/>
</dbReference>
<dbReference type="GO" id="GO:0030163">
    <property type="term" value="P:protein catabolic process"/>
    <property type="evidence" value="ECO:0007669"/>
    <property type="project" value="Ensembl"/>
</dbReference>
<dbReference type="GO" id="GO:0006508">
    <property type="term" value="P:proteolysis"/>
    <property type="evidence" value="ECO:0007669"/>
    <property type="project" value="UniProtKB-KW"/>
</dbReference>
<dbReference type="CDD" id="cd00094">
    <property type="entry name" value="HX"/>
    <property type="match status" value="1"/>
</dbReference>
<dbReference type="CDD" id="cd04278">
    <property type="entry name" value="ZnMc_MMP"/>
    <property type="match status" value="1"/>
</dbReference>
<dbReference type="FunFam" id="3.40.390.10:FF:000007">
    <property type="entry name" value="Collagenase 3"/>
    <property type="match status" value="1"/>
</dbReference>
<dbReference type="FunFam" id="2.110.10.10:FF:000002">
    <property type="entry name" value="Matrix metallopeptidase 3"/>
    <property type="match status" value="1"/>
</dbReference>
<dbReference type="Gene3D" id="3.40.390.10">
    <property type="entry name" value="Collagenase (Catalytic Domain)"/>
    <property type="match status" value="1"/>
</dbReference>
<dbReference type="Gene3D" id="2.110.10.10">
    <property type="entry name" value="Hemopexin-like domain"/>
    <property type="match status" value="1"/>
</dbReference>
<dbReference type="InterPro" id="IPR000585">
    <property type="entry name" value="Hemopexin-like_dom"/>
</dbReference>
<dbReference type="InterPro" id="IPR036375">
    <property type="entry name" value="Hemopexin-like_dom_sf"/>
</dbReference>
<dbReference type="InterPro" id="IPR018487">
    <property type="entry name" value="Hemopexin-like_repeat"/>
</dbReference>
<dbReference type="InterPro" id="IPR033739">
    <property type="entry name" value="M10A_MMP"/>
</dbReference>
<dbReference type="InterPro" id="IPR024079">
    <property type="entry name" value="MetalloPept_cat_dom_sf"/>
</dbReference>
<dbReference type="InterPro" id="IPR001818">
    <property type="entry name" value="Pept_M10_metallopeptidase"/>
</dbReference>
<dbReference type="InterPro" id="IPR021190">
    <property type="entry name" value="Pept_M10A"/>
</dbReference>
<dbReference type="InterPro" id="IPR021158">
    <property type="entry name" value="Pept_M10A_Zn_BS"/>
</dbReference>
<dbReference type="InterPro" id="IPR006026">
    <property type="entry name" value="Peptidase_Metallo"/>
</dbReference>
<dbReference type="InterPro" id="IPR002477">
    <property type="entry name" value="Peptidoglycan-bd-like"/>
</dbReference>
<dbReference type="InterPro" id="IPR036365">
    <property type="entry name" value="PGBD-like_sf"/>
</dbReference>
<dbReference type="PANTHER" id="PTHR10201">
    <property type="entry name" value="MATRIX METALLOPROTEINASE"/>
    <property type="match status" value="1"/>
</dbReference>
<dbReference type="PANTHER" id="PTHR10201:SF125">
    <property type="entry name" value="MATRIX METALLOPROTEINASE-20"/>
    <property type="match status" value="1"/>
</dbReference>
<dbReference type="Pfam" id="PF00045">
    <property type="entry name" value="Hemopexin"/>
    <property type="match status" value="4"/>
</dbReference>
<dbReference type="Pfam" id="PF00413">
    <property type="entry name" value="Peptidase_M10"/>
    <property type="match status" value="1"/>
</dbReference>
<dbReference type="Pfam" id="PF01471">
    <property type="entry name" value="PG_binding_1"/>
    <property type="match status" value="1"/>
</dbReference>
<dbReference type="PIRSF" id="PIRSF001191">
    <property type="entry name" value="Peptidase_M10A_matrix"/>
    <property type="match status" value="1"/>
</dbReference>
<dbReference type="PRINTS" id="PR00138">
    <property type="entry name" value="MATRIXIN"/>
</dbReference>
<dbReference type="SMART" id="SM00120">
    <property type="entry name" value="HX"/>
    <property type="match status" value="4"/>
</dbReference>
<dbReference type="SMART" id="SM00235">
    <property type="entry name" value="ZnMc"/>
    <property type="match status" value="1"/>
</dbReference>
<dbReference type="SUPFAM" id="SSF50923">
    <property type="entry name" value="Hemopexin-like domain"/>
    <property type="match status" value="1"/>
</dbReference>
<dbReference type="SUPFAM" id="SSF55486">
    <property type="entry name" value="Metalloproteases ('zincins'), catalytic domain"/>
    <property type="match status" value="1"/>
</dbReference>
<dbReference type="SUPFAM" id="SSF47090">
    <property type="entry name" value="PGBD-like"/>
    <property type="match status" value="1"/>
</dbReference>
<dbReference type="PROSITE" id="PS00546">
    <property type="entry name" value="CYSTEINE_SWITCH"/>
    <property type="match status" value="1"/>
</dbReference>
<dbReference type="PROSITE" id="PS51642">
    <property type="entry name" value="HEMOPEXIN_2"/>
    <property type="match status" value="4"/>
</dbReference>
<dbReference type="PROSITE" id="PS00142">
    <property type="entry name" value="ZINC_PROTEASE"/>
    <property type="match status" value="1"/>
</dbReference>
<name>MMP20_PIG</name>
<accession>P79287</accession>
<evidence type="ECO:0000250" key="1"/>
<evidence type="ECO:0000255" key="2"/>
<evidence type="ECO:0000255" key="3">
    <source>
        <dbReference type="PROSITE-ProRule" id="PRU10095"/>
    </source>
</evidence>
<evidence type="ECO:0000305" key="4"/>
<sequence length="483" mass="54085">MKVLPASGLAVLLVTALKFSAAAPSLFAATPRTSRNNYHLAQAYLDKYYTKKGGHQVGEMVAKGGNSMVKKIKELQAFFGLRVTGKLDRTTMDVIKRPRCGVPDVANYRLFPGEPKWKKNTLTYRISKYTPSMTPAEVDKAMEMALQAWSSAVPLSFVRVNAGEADIMISFETGDHGDSYPFDGPRGTLAHAFAPGEGLGGDTHFDNAEKWTMGMNGFNLFTVAAHEFGHALGLAHSTDPSALMYPTYKYQNPYGFHLPKDDVKGIQALYGPRKTFTGKPTVPHGPPHNPSLPDICDSSSSFDAVTMLGKELLFFRDRIFWRRQVHLMSGIRPSTITSSFPQLMSNVDAAYEVADRGMAYFFKGPHYWITRGFQMQGPPRTIYDFGFPRYVQRIDAAVHLKDTQKTLFFVGDEYYSYDERKRKMDKDYPKNTEEEFSGVNGQIDAAVELNGYIYFFSGPKAYKYDTEKEDVVSVLKSNSWIGC</sequence>
<feature type="signal peptide" evidence="2">
    <location>
        <begin position="1"/>
        <end position="22"/>
    </location>
</feature>
<feature type="propeptide" id="PRO_0000028837" description="Activation peptide" evidence="2">
    <location>
        <begin position="23"/>
        <end position="107"/>
    </location>
</feature>
<feature type="chain" id="PRO_0000028838" description="Matrix metalloproteinase-20">
    <location>
        <begin position="108"/>
        <end position="483"/>
    </location>
</feature>
<feature type="repeat" description="Hemopexin 1">
    <location>
        <begin position="293"/>
        <end position="343"/>
    </location>
</feature>
<feature type="repeat" description="Hemopexin 2">
    <location>
        <begin position="344"/>
        <end position="389"/>
    </location>
</feature>
<feature type="repeat" description="Hemopexin 3">
    <location>
        <begin position="391"/>
        <end position="439"/>
    </location>
</feature>
<feature type="repeat" description="Hemopexin 4">
    <location>
        <begin position="440"/>
        <end position="483"/>
    </location>
</feature>
<feature type="short sequence motif" description="Cysteine switch" evidence="1">
    <location>
        <begin position="98"/>
        <end position="105"/>
    </location>
</feature>
<feature type="active site" evidence="3">
    <location>
        <position position="227"/>
    </location>
</feature>
<feature type="binding site" description="in inhibited form" evidence="1">
    <location>
        <position position="100"/>
    </location>
    <ligand>
        <name>Zn(2+)</name>
        <dbReference type="ChEBI" id="CHEBI:29105"/>
        <label>1</label>
        <note>catalytic</note>
    </ligand>
</feature>
<feature type="binding site" evidence="1">
    <location>
        <position position="164"/>
    </location>
    <ligand>
        <name>Ca(2+)</name>
        <dbReference type="ChEBI" id="CHEBI:29108"/>
        <label>1</label>
    </ligand>
</feature>
<feature type="binding site" evidence="1">
    <location>
        <position position="165"/>
    </location>
    <ligand>
        <name>Ca(2+)</name>
        <dbReference type="ChEBI" id="CHEBI:29108"/>
        <label>1</label>
    </ligand>
</feature>
<feature type="binding site" evidence="1">
    <location>
        <position position="166"/>
    </location>
    <ligand>
        <name>Ca(2+)</name>
        <dbReference type="ChEBI" id="CHEBI:29108"/>
        <label>1</label>
    </ligand>
</feature>
<feature type="binding site" evidence="1">
    <location>
        <position position="176"/>
    </location>
    <ligand>
        <name>Zn(2+)</name>
        <dbReference type="ChEBI" id="CHEBI:29105"/>
        <label>2</label>
    </ligand>
</feature>
<feature type="binding site" evidence="1">
    <location>
        <position position="178"/>
    </location>
    <ligand>
        <name>Zn(2+)</name>
        <dbReference type="ChEBI" id="CHEBI:29105"/>
        <label>2</label>
    </ligand>
</feature>
<feature type="binding site" evidence="1">
    <location>
        <position position="183"/>
    </location>
    <ligand>
        <name>Ca(2+)</name>
        <dbReference type="ChEBI" id="CHEBI:29108"/>
        <label>2</label>
    </ligand>
</feature>
<feature type="binding site" evidence="1">
    <location>
        <position position="184"/>
    </location>
    <ligand>
        <name>Ca(2+)</name>
        <dbReference type="ChEBI" id="CHEBI:29108"/>
        <label>2</label>
    </ligand>
</feature>
<feature type="binding site" evidence="1">
    <location>
        <position position="186"/>
    </location>
    <ligand>
        <name>Ca(2+)</name>
        <dbReference type="ChEBI" id="CHEBI:29108"/>
        <label>2</label>
    </ligand>
</feature>
<feature type="binding site" evidence="1">
    <location>
        <position position="188"/>
    </location>
    <ligand>
        <name>Ca(2+)</name>
        <dbReference type="ChEBI" id="CHEBI:29108"/>
        <label>2</label>
    </ligand>
</feature>
<feature type="binding site" evidence="1">
    <location>
        <position position="191"/>
    </location>
    <ligand>
        <name>Zn(2+)</name>
        <dbReference type="ChEBI" id="CHEBI:29105"/>
        <label>2</label>
    </ligand>
</feature>
<feature type="binding site" evidence="1">
    <location>
        <position position="197"/>
    </location>
    <ligand>
        <name>Ca(2+)</name>
        <dbReference type="ChEBI" id="CHEBI:29108"/>
        <label>1</label>
    </ligand>
</feature>
<feature type="binding site" evidence="1">
    <location>
        <position position="198"/>
    </location>
    <ligand>
        <name>Ca(2+)</name>
        <dbReference type="ChEBI" id="CHEBI:29108"/>
        <label>1</label>
    </ligand>
</feature>
<feature type="binding site" evidence="1">
    <location>
        <position position="200"/>
    </location>
    <ligand>
        <name>Ca(2+)</name>
        <dbReference type="ChEBI" id="CHEBI:29108"/>
        <label>1</label>
    </ligand>
</feature>
<feature type="binding site" evidence="1">
    <location>
        <position position="202"/>
    </location>
    <ligand>
        <name>Ca(2+)</name>
        <dbReference type="ChEBI" id="CHEBI:29108"/>
        <label>1</label>
    </ligand>
</feature>
<feature type="binding site" evidence="1">
    <location>
        <position position="204"/>
    </location>
    <ligand>
        <name>Zn(2+)</name>
        <dbReference type="ChEBI" id="CHEBI:29105"/>
        <label>2</label>
    </ligand>
</feature>
<feature type="binding site" evidence="1">
    <location>
        <position position="206"/>
    </location>
    <ligand>
        <name>Ca(2+)</name>
        <dbReference type="ChEBI" id="CHEBI:29108"/>
        <label>2</label>
    </ligand>
</feature>
<feature type="binding site" evidence="1">
    <location>
        <position position="209"/>
    </location>
    <ligand>
        <name>Ca(2+)</name>
        <dbReference type="ChEBI" id="CHEBI:29108"/>
        <label>2</label>
    </ligand>
</feature>
<feature type="binding site" evidence="1">
    <location>
        <position position="226"/>
    </location>
    <ligand>
        <name>Zn(2+)</name>
        <dbReference type="ChEBI" id="CHEBI:29105"/>
        <label>1</label>
        <note>catalytic</note>
    </ligand>
</feature>
<feature type="binding site" evidence="1">
    <location>
        <position position="230"/>
    </location>
    <ligand>
        <name>Zn(2+)</name>
        <dbReference type="ChEBI" id="CHEBI:29105"/>
        <label>1</label>
        <note>catalytic</note>
    </ligand>
</feature>
<feature type="binding site" evidence="1">
    <location>
        <position position="236"/>
    </location>
    <ligand>
        <name>Zn(2+)</name>
        <dbReference type="ChEBI" id="CHEBI:29105"/>
        <label>1</label>
        <note>catalytic</note>
    </ligand>
</feature>
<feature type="disulfide bond" evidence="1">
    <location>
        <begin position="296"/>
        <end position="483"/>
    </location>
</feature>
<proteinExistence type="evidence at transcript level"/>
<reference key="1">
    <citation type="journal article" date="1996" name="Gene">
        <title>Molecular cloning and mRNA tissue distribution of a novel matrix metalloproteinase isolated from porcine enamel organ.</title>
        <authorList>
            <person name="Bartlett J.D."/>
            <person name="Simmer J.P."/>
            <person name="Xue J."/>
            <person name="Margolis H.C."/>
            <person name="Moreno E.C."/>
        </authorList>
    </citation>
    <scope>NUCLEOTIDE SEQUENCE [MRNA]</scope>
    <source>
        <tissue>Enamel organ</tissue>
    </source>
</reference>
<protein>
    <recommendedName>
        <fullName>Matrix metalloproteinase-20</fullName>
        <shortName>MMP-20</shortName>
        <ecNumber>3.4.24.-</ecNumber>
    </recommendedName>
    <alternativeName>
        <fullName>Enamel metalloproteinase</fullName>
    </alternativeName>
    <alternativeName>
        <fullName>Enamelysin</fullName>
    </alternativeName>
</protein>